<feature type="chain" id="PRO_0000199734" description="NAD-reducing hydrogenase HoxS subunit delta">
    <location>
        <begin position="1"/>
        <end position="209"/>
    </location>
</feature>
<sequence length="209" mass="22881">MRAPHKDEIASHELPATPMDPALAANREGKIKVATIGLCGCWGCTLSFLDMDERLLPLLEKVTLLRSSLTDIKRIPERCAIGFVEGGVSSEENIETLEHFRENCDILISVGACAVWGGVPAMRNVFELKDCLAEAYVNSATAVPGAKAVVPFHPDIPRITTKVYPCHEVVKMDYFIPGCPPDGDAIFKVLDDLVNGRPFDLPSSINRYD</sequence>
<accession>P22319</accession>
<geneLocation type="plasmid">
    <name>megaplasmid pHG1</name>
</geneLocation>
<dbReference type="EC" id="1.12.1.2"/>
<dbReference type="EMBL" id="M55230">
    <property type="protein sequence ID" value="AAC06142.1"/>
    <property type="molecule type" value="Genomic_DNA"/>
</dbReference>
<dbReference type="EMBL" id="AY305378">
    <property type="protein sequence ID" value="AAP85843.1"/>
    <property type="molecule type" value="Genomic_DNA"/>
</dbReference>
<dbReference type="PIR" id="C35385">
    <property type="entry name" value="C35385"/>
</dbReference>
<dbReference type="RefSeq" id="WP_011154012.1">
    <property type="nucleotide sequence ID" value="NC_005241.1"/>
</dbReference>
<dbReference type="SMR" id="P22319"/>
<dbReference type="KEGG" id="reh:PHG090"/>
<dbReference type="eggNOG" id="COG1941">
    <property type="taxonomic scope" value="Bacteria"/>
</dbReference>
<dbReference type="HOGENOM" id="CLU_093095_0_0_4"/>
<dbReference type="BioCyc" id="MetaCyc:HOXYALCA-MONOMER"/>
<dbReference type="BRENDA" id="1.12.1.2">
    <property type="organism ID" value="231"/>
</dbReference>
<dbReference type="Proteomes" id="UP000008210">
    <property type="component" value="Plasmid megaplasmid pHG1"/>
</dbReference>
<dbReference type="GO" id="GO:0005737">
    <property type="term" value="C:cytoplasm"/>
    <property type="evidence" value="ECO:0007669"/>
    <property type="project" value="UniProtKB-SubCell"/>
</dbReference>
<dbReference type="GO" id="GO:0051537">
    <property type="term" value="F:2 iron, 2 sulfur cluster binding"/>
    <property type="evidence" value="ECO:0007669"/>
    <property type="project" value="UniProtKB-KW"/>
</dbReference>
<dbReference type="GO" id="GO:0051538">
    <property type="term" value="F:3 iron, 4 sulfur cluster binding"/>
    <property type="evidence" value="ECO:0007669"/>
    <property type="project" value="UniProtKB-KW"/>
</dbReference>
<dbReference type="GO" id="GO:0051539">
    <property type="term" value="F:4 iron, 4 sulfur cluster binding"/>
    <property type="evidence" value="ECO:0007669"/>
    <property type="project" value="UniProtKB-KW"/>
</dbReference>
<dbReference type="GO" id="GO:0047985">
    <property type="term" value="F:hydrogen dehydrogenase activity"/>
    <property type="evidence" value="ECO:0007669"/>
    <property type="project" value="UniProtKB-EC"/>
</dbReference>
<dbReference type="GO" id="GO:0046872">
    <property type="term" value="F:metal ion binding"/>
    <property type="evidence" value="ECO:0007669"/>
    <property type="project" value="UniProtKB-KW"/>
</dbReference>
<dbReference type="Gene3D" id="3.40.50.700">
    <property type="entry name" value="NADH:ubiquinone oxidoreductase-like, 20kDa subunit"/>
    <property type="match status" value="1"/>
</dbReference>
<dbReference type="InterPro" id="IPR051349">
    <property type="entry name" value="Hydrogenase_assoc-protein"/>
</dbReference>
<dbReference type="InterPro" id="IPR006137">
    <property type="entry name" value="NADH_UbQ_OxRdtase-like_20kDa"/>
</dbReference>
<dbReference type="InterPro" id="IPR037024">
    <property type="entry name" value="NiFe_Hase_small_N_sf"/>
</dbReference>
<dbReference type="PANTHER" id="PTHR42845">
    <property type="entry name" value="COENZYME F420-REDUCING HYDROGENASE, GAMMA SUBUNIT"/>
    <property type="match status" value="1"/>
</dbReference>
<dbReference type="PANTHER" id="PTHR42845:SF1">
    <property type="entry name" value="HYDROGENASE SMALL SUBUNIT"/>
    <property type="match status" value="1"/>
</dbReference>
<dbReference type="Pfam" id="PF01058">
    <property type="entry name" value="Oxidored_q6"/>
    <property type="match status" value="1"/>
</dbReference>
<dbReference type="SUPFAM" id="SSF56770">
    <property type="entry name" value="HydA/Nqo6-like"/>
    <property type="match status" value="1"/>
</dbReference>
<organism>
    <name type="scientific">Cupriavidus necator (strain ATCC 17699 / DSM 428 / KCTC 22496 / NCIMB 10442 / H16 / Stanier 337)</name>
    <name type="common">Ralstonia eutropha</name>
    <dbReference type="NCBI Taxonomy" id="381666"/>
    <lineage>
        <taxon>Bacteria</taxon>
        <taxon>Pseudomonadati</taxon>
        <taxon>Pseudomonadota</taxon>
        <taxon>Betaproteobacteria</taxon>
        <taxon>Burkholderiales</taxon>
        <taxon>Burkholderiaceae</taxon>
        <taxon>Cupriavidus</taxon>
    </lineage>
</organism>
<keyword id="KW-0001">2Fe-2S</keyword>
<keyword id="KW-0003">3Fe-4S</keyword>
<keyword id="KW-0004">4Fe-4S</keyword>
<keyword id="KW-0963">Cytoplasm</keyword>
<keyword id="KW-0903">Direct protein sequencing</keyword>
<keyword id="KW-0408">Iron</keyword>
<keyword id="KW-0411">Iron-sulfur</keyword>
<keyword id="KW-0479">Metal-binding</keyword>
<keyword id="KW-0520">NAD</keyword>
<keyword id="KW-0560">Oxidoreductase</keyword>
<keyword id="KW-0614">Plasmid</keyword>
<keyword id="KW-1185">Reference proteome</keyword>
<proteinExistence type="evidence at protein level"/>
<gene>
    <name type="primary">hoxY</name>
    <name type="ordered locus">PHG090</name>
</gene>
<comment type="catalytic activity">
    <reaction>
        <text>H2 + NAD(+) = NADH + H(+)</text>
        <dbReference type="Rhea" id="RHEA:24636"/>
        <dbReference type="ChEBI" id="CHEBI:15378"/>
        <dbReference type="ChEBI" id="CHEBI:18276"/>
        <dbReference type="ChEBI" id="CHEBI:57540"/>
        <dbReference type="ChEBI" id="CHEBI:57945"/>
        <dbReference type="EC" id="1.12.1.2"/>
    </reaction>
</comment>
<comment type="cofactor">
    <cofactor>
        <name>[4Fe-4S] cluster</name>
        <dbReference type="ChEBI" id="CHEBI:49883"/>
    </cofactor>
    <text>Binds 2 [4Fe-4S] clusters.</text>
</comment>
<comment type="cofactor">
    <cofactor>
        <name>[3Fe-4S] cluster</name>
        <dbReference type="ChEBI" id="CHEBI:21137"/>
    </cofactor>
    <text>Binds 1 [3Fe-4S] cluster.</text>
</comment>
<comment type="cofactor">
    <cofactor>
        <name>[2Fe-2S] cluster</name>
        <dbReference type="ChEBI" id="CHEBI:190135"/>
    </cofactor>
    <text>Binds 1 [2Fe-2S] cluster.</text>
</comment>
<comment type="cofactor">
    <cofactor>
        <name>FMN</name>
        <dbReference type="ChEBI" id="CHEBI:58210"/>
    </cofactor>
</comment>
<comment type="cofactor">
    <cofactor>
        <name>Ni(2+)</name>
        <dbReference type="ChEBI" id="CHEBI:49786"/>
    </cofactor>
</comment>
<comment type="subunit">
    <text>Tetramer of an alpha and a gamma subunits (flavin-containing dimer), and a delta and a nickel-containing beta subunits (hydrogenase dimer).</text>
</comment>
<comment type="subcellular location">
    <subcellularLocation>
        <location>Cytoplasm</location>
    </subcellularLocation>
</comment>
<protein>
    <recommendedName>
        <fullName>NAD-reducing hydrogenase HoxS subunit delta</fullName>
        <ecNumber>1.12.1.2</ecNumber>
    </recommendedName>
</protein>
<name>HOXY_CUPNH</name>
<reference key="1">
    <citation type="journal article" date="1990" name="J. Bacteriol.">
        <title>Cloning and nucleotide sequences of the genes for the subunits of NAD-reducing hydrogenase of Alcaligenes eutrophus H16.</title>
        <authorList>
            <person name="Tran-Betcke A."/>
            <person name="Warnecke U."/>
            <person name="Boecker C."/>
            <person name="Zaborosch C."/>
            <person name="Friedrich B."/>
        </authorList>
    </citation>
    <scope>NUCLEOTIDE SEQUENCE [GENOMIC DNA]</scope>
</reference>
<reference key="2">
    <citation type="journal article" date="2003" name="J. Mol. Biol.">
        <title>Complete nucleotide sequence of pHG1: a Ralstonia eutropha H16 megaplasmid encoding key enzymes of H(2)-based lithoautotrophy and anaerobiosis.</title>
        <authorList>
            <person name="Schwartz E."/>
            <person name="Henne A."/>
            <person name="Cramm R."/>
            <person name="Eitinger T."/>
            <person name="Friedrich B."/>
            <person name="Gottschalk G."/>
        </authorList>
    </citation>
    <scope>NUCLEOTIDE SEQUENCE [LARGE SCALE GENOMIC DNA]</scope>
    <source>
        <strain>ATCC 17699 / DSM 428 / KCTC 22496 / NCIMB 10442 / H16 / Stanier 337</strain>
    </source>
</reference>
<reference key="3">
    <citation type="journal article" date="1989" name="Eur. J. Biochem.">
        <title>Comparison of the NH2-terminal amino acid sequences of the four non-identical subunits of the NAD-linked hydrogenases from Nocardia opaca 1b and Alcaligenes eutrophus H16.</title>
        <authorList>
            <person name="Zaborosch C."/>
            <person name="Schneider K."/>
            <person name="Schlegel H.G."/>
            <person name="Kratzin H."/>
        </authorList>
    </citation>
    <scope>PROTEIN SEQUENCE OF 1-20</scope>
</reference>